<name>TRMFO_DESHY</name>
<keyword id="KW-0963">Cytoplasm</keyword>
<keyword id="KW-0274">FAD</keyword>
<keyword id="KW-0285">Flavoprotein</keyword>
<keyword id="KW-0489">Methyltransferase</keyword>
<keyword id="KW-0520">NAD</keyword>
<keyword id="KW-0521">NADP</keyword>
<keyword id="KW-1185">Reference proteome</keyword>
<keyword id="KW-0808">Transferase</keyword>
<keyword id="KW-0819">tRNA processing</keyword>
<comment type="function">
    <text evidence="1">Catalyzes the folate-dependent formation of 5-methyl-uridine at position 54 (M-5-U54) in all tRNAs.</text>
</comment>
<comment type="catalytic activity">
    <reaction evidence="1">
        <text>uridine(54) in tRNA + (6R)-5,10-methylene-5,6,7,8-tetrahydrofolate + NADH + H(+) = 5-methyluridine(54) in tRNA + (6S)-5,6,7,8-tetrahydrofolate + NAD(+)</text>
        <dbReference type="Rhea" id="RHEA:16873"/>
        <dbReference type="Rhea" id="RHEA-COMP:10167"/>
        <dbReference type="Rhea" id="RHEA-COMP:10193"/>
        <dbReference type="ChEBI" id="CHEBI:15378"/>
        <dbReference type="ChEBI" id="CHEBI:15636"/>
        <dbReference type="ChEBI" id="CHEBI:57453"/>
        <dbReference type="ChEBI" id="CHEBI:57540"/>
        <dbReference type="ChEBI" id="CHEBI:57945"/>
        <dbReference type="ChEBI" id="CHEBI:65315"/>
        <dbReference type="ChEBI" id="CHEBI:74447"/>
        <dbReference type="EC" id="2.1.1.74"/>
    </reaction>
</comment>
<comment type="catalytic activity">
    <reaction evidence="1">
        <text>uridine(54) in tRNA + (6R)-5,10-methylene-5,6,7,8-tetrahydrofolate + NADPH + H(+) = 5-methyluridine(54) in tRNA + (6S)-5,6,7,8-tetrahydrofolate + NADP(+)</text>
        <dbReference type="Rhea" id="RHEA:62372"/>
        <dbReference type="Rhea" id="RHEA-COMP:10167"/>
        <dbReference type="Rhea" id="RHEA-COMP:10193"/>
        <dbReference type="ChEBI" id="CHEBI:15378"/>
        <dbReference type="ChEBI" id="CHEBI:15636"/>
        <dbReference type="ChEBI" id="CHEBI:57453"/>
        <dbReference type="ChEBI" id="CHEBI:57783"/>
        <dbReference type="ChEBI" id="CHEBI:58349"/>
        <dbReference type="ChEBI" id="CHEBI:65315"/>
        <dbReference type="ChEBI" id="CHEBI:74447"/>
        <dbReference type="EC" id="2.1.1.74"/>
    </reaction>
</comment>
<comment type="cofactor">
    <cofactor evidence="1">
        <name>FAD</name>
        <dbReference type="ChEBI" id="CHEBI:57692"/>
    </cofactor>
</comment>
<comment type="subcellular location">
    <subcellularLocation>
        <location evidence="1">Cytoplasm</location>
    </subcellularLocation>
</comment>
<comment type="similarity">
    <text evidence="1">Belongs to the MnmG family. TrmFO subfamily.</text>
</comment>
<reference key="1">
    <citation type="journal article" date="2006" name="J. Bacteriol.">
        <title>Complete genome sequence of the dehalorespiring bacterium Desulfitobacterium hafniense Y51 and comparison with Dehalococcoides ethenogenes 195.</title>
        <authorList>
            <person name="Nonaka H."/>
            <person name="Keresztes G."/>
            <person name="Shinoda Y."/>
            <person name="Ikenaga Y."/>
            <person name="Abe M."/>
            <person name="Naito K."/>
            <person name="Inatomi K."/>
            <person name="Furukawa K."/>
            <person name="Inui M."/>
            <person name="Yukawa H."/>
        </authorList>
    </citation>
    <scope>NUCLEOTIDE SEQUENCE [LARGE SCALE GENOMIC DNA]</scope>
    <source>
        <strain>Y51</strain>
    </source>
</reference>
<gene>
    <name evidence="1" type="primary">trmFO</name>
    <name type="ordered locus">DSY2553</name>
</gene>
<feature type="chain" id="PRO_0000346332" description="Methylenetetrahydrofolate--tRNA-(uracil-5-)-methyltransferase TrmFO">
    <location>
        <begin position="1"/>
        <end position="437"/>
    </location>
</feature>
<feature type="binding site" evidence="1">
    <location>
        <begin position="8"/>
        <end position="13"/>
    </location>
    <ligand>
        <name>FAD</name>
        <dbReference type="ChEBI" id="CHEBI:57692"/>
    </ligand>
</feature>
<proteinExistence type="inferred from homology"/>
<protein>
    <recommendedName>
        <fullName evidence="1">Methylenetetrahydrofolate--tRNA-(uracil-5-)-methyltransferase TrmFO</fullName>
        <ecNumber evidence="1">2.1.1.74</ecNumber>
    </recommendedName>
    <alternativeName>
        <fullName evidence="1">Folate-dependent tRNA (uracil-5-)-methyltransferase</fullName>
    </alternativeName>
    <alternativeName>
        <fullName evidence="1">Folate-dependent tRNA(M-5-U54)-methyltransferase</fullName>
    </alternativeName>
</protein>
<organism>
    <name type="scientific">Desulfitobacterium hafniense (strain Y51)</name>
    <dbReference type="NCBI Taxonomy" id="138119"/>
    <lineage>
        <taxon>Bacteria</taxon>
        <taxon>Bacillati</taxon>
        <taxon>Bacillota</taxon>
        <taxon>Clostridia</taxon>
        <taxon>Eubacteriales</taxon>
        <taxon>Desulfitobacteriaceae</taxon>
        <taxon>Desulfitobacterium</taxon>
    </lineage>
</organism>
<sequence>MSAIKVIGAGLAGAEAAWQIARQGIEVELYEMRPVQMTPAHHTGHFAELVCSNSLKGAGLDNAAGLLKEEMRRLDSLLMRVADQYAVPAGGALAVDREQFSQEITKLLQEHPLIQVHREEVKSLPQAGIAVIATGPLTAEGLAREIQKMTGEDALAFYDAAAPIVTLESINLEKAFWASRYDKGDPDYLNCPMTEEEYKRFYHELLKAETAEVKGFEKGKVFEGCMPVEVMAARGEQTLTFGPLKPVGLIDARTGQRSYAVVQLRKENRAGTLFNLVGFQTHLKWGEQQRVFRLIPGLENAEFVRFGVMHRNTFLNAPKVLKADYSLQKTPQLFFAGQITGVEGYVESTASGLVAGLNAVRRLKNLPTLIFPQETALGALARHLEGSPSVDFQPMSINYGLLPPLEVRIKAKKEKNAKISARALAKLEEFKAAEGLD</sequence>
<accession>Q24UF0</accession>
<dbReference type="EC" id="2.1.1.74" evidence="1"/>
<dbReference type="EMBL" id="AP008230">
    <property type="protein sequence ID" value="BAE84342.1"/>
    <property type="molecule type" value="Genomic_DNA"/>
</dbReference>
<dbReference type="RefSeq" id="WP_005813284.1">
    <property type="nucleotide sequence ID" value="NC_007907.1"/>
</dbReference>
<dbReference type="SMR" id="Q24UF0"/>
<dbReference type="STRING" id="138119.DSY2553"/>
<dbReference type="KEGG" id="dsy:DSY2553"/>
<dbReference type="eggNOG" id="COG1206">
    <property type="taxonomic scope" value="Bacteria"/>
</dbReference>
<dbReference type="HOGENOM" id="CLU_033057_1_0_9"/>
<dbReference type="Proteomes" id="UP000001946">
    <property type="component" value="Chromosome"/>
</dbReference>
<dbReference type="GO" id="GO:0005829">
    <property type="term" value="C:cytosol"/>
    <property type="evidence" value="ECO:0007669"/>
    <property type="project" value="TreeGrafter"/>
</dbReference>
<dbReference type="GO" id="GO:0050660">
    <property type="term" value="F:flavin adenine dinucleotide binding"/>
    <property type="evidence" value="ECO:0007669"/>
    <property type="project" value="UniProtKB-UniRule"/>
</dbReference>
<dbReference type="GO" id="GO:0047151">
    <property type="term" value="F:tRNA (uracil(54)-C5)-methyltransferase activity, 5,10-methylenetetrahydrofolate-dependent"/>
    <property type="evidence" value="ECO:0007669"/>
    <property type="project" value="UniProtKB-UniRule"/>
</dbReference>
<dbReference type="GO" id="GO:0030488">
    <property type="term" value="P:tRNA methylation"/>
    <property type="evidence" value="ECO:0007669"/>
    <property type="project" value="TreeGrafter"/>
</dbReference>
<dbReference type="GO" id="GO:0002098">
    <property type="term" value="P:tRNA wobble uridine modification"/>
    <property type="evidence" value="ECO:0007669"/>
    <property type="project" value="TreeGrafter"/>
</dbReference>
<dbReference type="Gene3D" id="3.50.50.60">
    <property type="entry name" value="FAD/NAD(P)-binding domain"/>
    <property type="match status" value="2"/>
</dbReference>
<dbReference type="HAMAP" id="MF_01037">
    <property type="entry name" value="TrmFO"/>
    <property type="match status" value="1"/>
</dbReference>
<dbReference type="InterPro" id="IPR036188">
    <property type="entry name" value="FAD/NAD-bd_sf"/>
</dbReference>
<dbReference type="InterPro" id="IPR002218">
    <property type="entry name" value="MnmG-rel"/>
</dbReference>
<dbReference type="InterPro" id="IPR040131">
    <property type="entry name" value="MnmG_N"/>
</dbReference>
<dbReference type="InterPro" id="IPR004417">
    <property type="entry name" value="TrmFO"/>
</dbReference>
<dbReference type="NCBIfam" id="TIGR00137">
    <property type="entry name" value="gid_trmFO"/>
    <property type="match status" value="1"/>
</dbReference>
<dbReference type="NCBIfam" id="NF003739">
    <property type="entry name" value="PRK05335.1"/>
    <property type="match status" value="1"/>
</dbReference>
<dbReference type="PANTHER" id="PTHR11806">
    <property type="entry name" value="GLUCOSE INHIBITED DIVISION PROTEIN A"/>
    <property type="match status" value="1"/>
</dbReference>
<dbReference type="PANTHER" id="PTHR11806:SF2">
    <property type="entry name" value="METHYLENETETRAHYDROFOLATE--TRNA-(URACIL-5-)-METHYLTRANSFERASE TRMFO"/>
    <property type="match status" value="1"/>
</dbReference>
<dbReference type="Pfam" id="PF01134">
    <property type="entry name" value="GIDA"/>
    <property type="match status" value="1"/>
</dbReference>
<dbReference type="SUPFAM" id="SSF51905">
    <property type="entry name" value="FAD/NAD(P)-binding domain"/>
    <property type="match status" value="1"/>
</dbReference>
<evidence type="ECO:0000255" key="1">
    <source>
        <dbReference type="HAMAP-Rule" id="MF_01037"/>
    </source>
</evidence>